<proteinExistence type="inferred from homology"/>
<organism>
    <name type="scientific">Neisseria gonorrhoeae (strain NCCP11945)</name>
    <dbReference type="NCBI Taxonomy" id="521006"/>
    <lineage>
        <taxon>Bacteria</taxon>
        <taxon>Pseudomonadati</taxon>
        <taxon>Pseudomonadota</taxon>
        <taxon>Betaproteobacteria</taxon>
        <taxon>Neisseriales</taxon>
        <taxon>Neisseriaceae</taxon>
        <taxon>Neisseria</taxon>
    </lineage>
</organism>
<reference key="1">
    <citation type="journal article" date="2008" name="J. Bacteriol.">
        <title>Complete genome sequence of Neisseria gonorrhoeae NCCP11945.</title>
        <authorList>
            <person name="Chung G.T."/>
            <person name="Yoo J.S."/>
            <person name="Oh H.B."/>
            <person name="Lee Y.S."/>
            <person name="Cha S.H."/>
            <person name="Kim S.J."/>
            <person name="Yoo C.K."/>
        </authorList>
    </citation>
    <scope>NUCLEOTIDE SEQUENCE [LARGE SCALE GENOMIC DNA]</scope>
    <source>
        <strain>NCCP11945</strain>
    </source>
</reference>
<feature type="chain" id="PRO_1000188107" description="Small ribosomal subunit biogenesis GTPase RsgA">
    <location>
        <begin position="1"/>
        <end position="307"/>
    </location>
</feature>
<feature type="domain" description="CP-type G" evidence="2">
    <location>
        <begin position="85"/>
        <end position="242"/>
    </location>
</feature>
<feature type="region of interest" description="Disordered" evidence="3">
    <location>
        <begin position="1"/>
        <end position="21"/>
    </location>
</feature>
<feature type="compositionally biased region" description="Polar residues" evidence="3">
    <location>
        <begin position="10"/>
        <end position="21"/>
    </location>
</feature>
<feature type="binding site" evidence="1">
    <location>
        <begin position="135"/>
        <end position="138"/>
    </location>
    <ligand>
        <name>GTP</name>
        <dbReference type="ChEBI" id="CHEBI:37565"/>
    </ligand>
</feature>
<feature type="binding site" evidence="1">
    <location>
        <begin position="184"/>
        <end position="192"/>
    </location>
    <ligand>
        <name>GTP</name>
        <dbReference type="ChEBI" id="CHEBI:37565"/>
    </ligand>
</feature>
<feature type="binding site" evidence="1">
    <location>
        <position position="266"/>
    </location>
    <ligand>
        <name>Zn(2+)</name>
        <dbReference type="ChEBI" id="CHEBI:29105"/>
    </ligand>
</feature>
<feature type="binding site" evidence="1">
    <location>
        <position position="271"/>
    </location>
    <ligand>
        <name>Zn(2+)</name>
        <dbReference type="ChEBI" id="CHEBI:29105"/>
    </ligand>
</feature>
<feature type="binding site" evidence="1">
    <location>
        <position position="273"/>
    </location>
    <ligand>
        <name>Zn(2+)</name>
        <dbReference type="ChEBI" id="CHEBI:29105"/>
    </ligand>
</feature>
<feature type="binding site" evidence="1">
    <location>
        <position position="279"/>
    </location>
    <ligand>
        <name>Zn(2+)</name>
        <dbReference type="ChEBI" id="CHEBI:29105"/>
    </ligand>
</feature>
<comment type="function">
    <text evidence="1">One of several proteins that assist in the late maturation steps of the functional core of the 30S ribosomal subunit. Helps release RbfA from mature subunits. May play a role in the assembly of ribosomal proteins into the subunit. Circularly permuted GTPase that catalyzes slow GTP hydrolysis, GTPase activity is stimulated by the 30S ribosomal subunit.</text>
</comment>
<comment type="cofactor">
    <cofactor evidence="1">
        <name>Zn(2+)</name>
        <dbReference type="ChEBI" id="CHEBI:29105"/>
    </cofactor>
    <text evidence="1">Binds 1 zinc ion per subunit.</text>
</comment>
<comment type="subunit">
    <text evidence="1">Monomer. Associates with 30S ribosomal subunit, binds 16S rRNA.</text>
</comment>
<comment type="subcellular location">
    <subcellularLocation>
        <location evidence="1">Cytoplasm</location>
    </subcellularLocation>
</comment>
<comment type="similarity">
    <text evidence="1">Belongs to the TRAFAC class YlqF/YawG GTPase family. RsgA subfamily.</text>
</comment>
<evidence type="ECO:0000255" key="1">
    <source>
        <dbReference type="HAMAP-Rule" id="MF_01820"/>
    </source>
</evidence>
<evidence type="ECO:0000255" key="2">
    <source>
        <dbReference type="PROSITE-ProRule" id="PRU01058"/>
    </source>
</evidence>
<evidence type="ECO:0000256" key="3">
    <source>
        <dbReference type="SAM" id="MobiDB-lite"/>
    </source>
</evidence>
<keyword id="KW-0963">Cytoplasm</keyword>
<keyword id="KW-0342">GTP-binding</keyword>
<keyword id="KW-0378">Hydrolase</keyword>
<keyword id="KW-0479">Metal-binding</keyword>
<keyword id="KW-0547">Nucleotide-binding</keyword>
<keyword id="KW-0690">Ribosome biogenesis</keyword>
<keyword id="KW-0694">RNA-binding</keyword>
<keyword id="KW-0699">rRNA-binding</keyword>
<keyword id="KW-0862">Zinc</keyword>
<gene>
    <name evidence="1" type="primary">rsgA</name>
    <name type="ordered locus">NGK_2132</name>
</gene>
<accession>B4RPG3</accession>
<protein>
    <recommendedName>
        <fullName evidence="1">Small ribosomal subunit biogenesis GTPase RsgA</fullName>
        <ecNumber evidence="1">3.6.1.-</ecNumber>
    </recommendedName>
</protein>
<name>RSGA_NEIG2</name>
<sequence length="307" mass="33538">MPSEHPFSDGISTPNPKETMNDTAQITAGYGRRYIVRTPDGTTYEASTRKKRVDFACGDRVRISPVNAEQVVIEDFLPRQSLLYRQDAWKTKLIAANVTQLLIVTAAVPSPSVRLLQRALLAAEAAGIRAVIVLNKADLPETALWLEKLKFYETLGYPVIETRVLENADSLRPVLQGHSNILLGQSGMGKSTLTNALLGSQTARTGDISAALDSGKHTTTHARLYDLNGETQLIDSPGLQEFGLHHLQAADLPHYFPDFRHLVGQCRFHNCTHRAEPGCAFKAAAETGAASPERLAFLQGITDELLG</sequence>
<dbReference type="EC" id="3.6.1.-" evidence="1"/>
<dbReference type="EMBL" id="CP001050">
    <property type="protein sequence ID" value="ACF30740.1"/>
    <property type="molecule type" value="Genomic_DNA"/>
</dbReference>
<dbReference type="RefSeq" id="WP_003689928.1">
    <property type="nucleotide sequence ID" value="NC_011035.1"/>
</dbReference>
<dbReference type="SMR" id="B4RPG3"/>
<dbReference type="GeneID" id="66754020"/>
<dbReference type="KEGG" id="ngk:NGK_2132"/>
<dbReference type="HOGENOM" id="CLU_033617_2_0_4"/>
<dbReference type="Proteomes" id="UP000002564">
    <property type="component" value="Chromosome"/>
</dbReference>
<dbReference type="GO" id="GO:0005737">
    <property type="term" value="C:cytoplasm"/>
    <property type="evidence" value="ECO:0007669"/>
    <property type="project" value="UniProtKB-SubCell"/>
</dbReference>
<dbReference type="GO" id="GO:0005525">
    <property type="term" value="F:GTP binding"/>
    <property type="evidence" value="ECO:0007669"/>
    <property type="project" value="UniProtKB-UniRule"/>
</dbReference>
<dbReference type="GO" id="GO:0003924">
    <property type="term" value="F:GTPase activity"/>
    <property type="evidence" value="ECO:0007669"/>
    <property type="project" value="UniProtKB-UniRule"/>
</dbReference>
<dbReference type="GO" id="GO:0046872">
    <property type="term" value="F:metal ion binding"/>
    <property type="evidence" value="ECO:0007669"/>
    <property type="project" value="UniProtKB-KW"/>
</dbReference>
<dbReference type="GO" id="GO:0019843">
    <property type="term" value="F:rRNA binding"/>
    <property type="evidence" value="ECO:0007669"/>
    <property type="project" value="UniProtKB-KW"/>
</dbReference>
<dbReference type="GO" id="GO:0042274">
    <property type="term" value="P:ribosomal small subunit biogenesis"/>
    <property type="evidence" value="ECO:0007669"/>
    <property type="project" value="UniProtKB-UniRule"/>
</dbReference>
<dbReference type="CDD" id="cd01854">
    <property type="entry name" value="YjeQ_EngC"/>
    <property type="match status" value="1"/>
</dbReference>
<dbReference type="Gene3D" id="3.40.50.300">
    <property type="entry name" value="P-loop containing nucleotide triphosphate hydrolases"/>
    <property type="match status" value="1"/>
</dbReference>
<dbReference type="Gene3D" id="1.10.40.50">
    <property type="entry name" value="Probable gtpase engc, domain 3"/>
    <property type="match status" value="1"/>
</dbReference>
<dbReference type="HAMAP" id="MF_01820">
    <property type="entry name" value="GTPase_RsgA"/>
    <property type="match status" value="1"/>
</dbReference>
<dbReference type="InterPro" id="IPR030378">
    <property type="entry name" value="G_CP_dom"/>
</dbReference>
<dbReference type="InterPro" id="IPR027417">
    <property type="entry name" value="P-loop_NTPase"/>
</dbReference>
<dbReference type="InterPro" id="IPR004881">
    <property type="entry name" value="Ribosome_biogen_GTPase_RsgA"/>
</dbReference>
<dbReference type="InterPro" id="IPR010914">
    <property type="entry name" value="RsgA_GTPase_dom"/>
</dbReference>
<dbReference type="NCBIfam" id="TIGR00157">
    <property type="entry name" value="ribosome small subunit-dependent GTPase A"/>
    <property type="match status" value="1"/>
</dbReference>
<dbReference type="PANTHER" id="PTHR32120">
    <property type="entry name" value="SMALL RIBOSOMAL SUBUNIT BIOGENESIS GTPASE RSGA"/>
    <property type="match status" value="1"/>
</dbReference>
<dbReference type="PANTHER" id="PTHR32120:SF11">
    <property type="entry name" value="SMALL RIBOSOMAL SUBUNIT BIOGENESIS GTPASE RSGA 1, MITOCHONDRIAL-RELATED"/>
    <property type="match status" value="1"/>
</dbReference>
<dbReference type="Pfam" id="PF03193">
    <property type="entry name" value="RsgA_GTPase"/>
    <property type="match status" value="1"/>
</dbReference>
<dbReference type="SUPFAM" id="SSF52540">
    <property type="entry name" value="P-loop containing nucleoside triphosphate hydrolases"/>
    <property type="match status" value="1"/>
</dbReference>
<dbReference type="PROSITE" id="PS50936">
    <property type="entry name" value="ENGC_GTPASE"/>
    <property type="match status" value="1"/>
</dbReference>
<dbReference type="PROSITE" id="PS51721">
    <property type="entry name" value="G_CP"/>
    <property type="match status" value="1"/>
</dbReference>